<feature type="chain" id="PRO_0000270263" description="Methionine import ATP-binding protein MetN 1">
    <location>
        <begin position="1"/>
        <end position="344"/>
    </location>
</feature>
<feature type="domain" description="ABC transporter" evidence="1">
    <location>
        <begin position="2"/>
        <end position="241"/>
    </location>
</feature>
<feature type="binding site" evidence="1">
    <location>
        <begin position="38"/>
        <end position="45"/>
    </location>
    <ligand>
        <name>ATP</name>
        <dbReference type="ChEBI" id="CHEBI:30616"/>
    </ligand>
</feature>
<protein>
    <recommendedName>
        <fullName evidence="1">Methionine import ATP-binding protein MetN 1</fullName>
        <ecNumber evidence="1">7.4.2.11</ecNumber>
    </recommendedName>
</protein>
<proteinExistence type="inferred from homology"/>
<accession>Q62M41</accession>
<name>METN1_BURMA</name>
<keyword id="KW-0029">Amino-acid transport</keyword>
<keyword id="KW-0067">ATP-binding</keyword>
<keyword id="KW-0997">Cell inner membrane</keyword>
<keyword id="KW-1003">Cell membrane</keyword>
<keyword id="KW-0472">Membrane</keyword>
<keyword id="KW-0547">Nucleotide-binding</keyword>
<keyword id="KW-1185">Reference proteome</keyword>
<keyword id="KW-1278">Translocase</keyword>
<keyword id="KW-0813">Transport</keyword>
<sequence length="344" mass="37567">MIEIRNLSQRFEGPRGWIEALHNVNLTIPQGEVFGIIGRSGAGKSTLVRTINLLTRPSEGSVFVGGRDLTQLSAAELRGARRDIGMIFQHFNLLSSRTVFDNVALPLELAGVKRAQIEATVLPLLDLVGLAAQKDRYPAQISGGQKQRVGIARALASKPKVLLSDEATSALDPETTRAILDLLRRINRELGLTIVLITHQMEVIKDVCDRVAVLDAGRVVEEGNVIDVFMRPHHEVTRALIGDVIAQELPPAMKARVAERLKTGSGHLLRLAFTGSGVDQPILSETIRRYELDFNILHGQIDEIQGRAFGSLAVLATGEPGKVGQAFAYLREQGVVVEELSYVE</sequence>
<evidence type="ECO:0000255" key="1">
    <source>
        <dbReference type="HAMAP-Rule" id="MF_01719"/>
    </source>
</evidence>
<organism>
    <name type="scientific">Burkholderia mallei (strain ATCC 23344)</name>
    <dbReference type="NCBI Taxonomy" id="243160"/>
    <lineage>
        <taxon>Bacteria</taxon>
        <taxon>Pseudomonadati</taxon>
        <taxon>Pseudomonadota</taxon>
        <taxon>Betaproteobacteria</taxon>
        <taxon>Burkholderiales</taxon>
        <taxon>Burkholderiaceae</taxon>
        <taxon>Burkholderia</taxon>
        <taxon>pseudomallei group</taxon>
    </lineage>
</organism>
<dbReference type="EC" id="7.4.2.11" evidence="1"/>
<dbReference type="EMBL" id="CP000010">
    <property type="protein sequence ID" value="AAU48789.1"/>
    <property type="molecule type" value="Genomic_DNA"/>
</dbReference>
<dbReference type="RefSeq" id="WP_004190044.1">
    <property type="nucleotide sequence ID" value="NC_006348.1"/>
</dbReference>
<dbReference type="RefSeq" id="YP_102227.1">
    <property type="nucleotide sequence ID" value="NC_006348.1"/>
</dbReference>
<dbReference type="SMR" id="Q62M41"/>
<dbReference type="KEGG" id="bma:BMA0414"/>
<dbReference type="PATRIC" id="fig|243160.12.peg.421"/>
<dbReference type="eggNOG" id="COG1135">
    <property type="taxonomic scope" value="Bacteria"/>
</dbReference>
<dbReference type="HOGENOM" id="CLU_000604_1_3_4"/>
<dbReference type="Proteomes" id="UP000006693">
    <property type="component" value="Chromosome 1"/>
</dbReference>
<dbReference type="GO" id="GO:0005886">
    <property type="term" value="C:plasma membrane"/>
    <property type="evidence" value="ECO:0007669"/>
    <property type="project" value="UniProtKB-SubCell"/>
</dbReference>
<dbReference type="GO" id="GO:0033232">
    <property type="term" value="F:ABC-type D-methionine transporter activity"/>
    <property type="evidence" value="ECO:0007669"/>
    <property type="project" value="UniProtKB-EC"/>
</dbReference>
<dbReference type="GO" id="GO:0005524">
    <property type="term" value="F:ATP binding"/>
    <property type="evidence" value="ECO:0007669"/>
    <property type="project" value="UniProtKB-KW"/>
</dbReference>
<dbReference type="GO" id="GO:0016887">
    <property type="term" value="F:ATP hydrolysis activity"/>
    <property type="evidence" value="ECO:0007669"/>
    <property type="project" value="InterPro"/>
</dbReference>
<dbReference type="CDD" id="cd03258">
    <property type="entry name" value="ABC_MetN_methionine_transporter"/>
    <property type="match status" value="1"/>
</dbReference>
<dbReference type="FunFam" id="3.40.50.300:FF:000056">
    <property type="entry name" value="Cell division ATP-binding protein FtsE"/>
    <property type="match status" value="1"/>
</dbReference>
<dbReference type="Gene3D" id="3.30.70.260">
    <property type="match status" value="1"/>
</dbReference>
<dbReference type="Gene3D" id="3.40.50.300">
    <property type="entry name" value="P-loop containing nucleotide triphosphate hydrolases"/>
    <property type="match status" value="1"/>
</dbReference>
<dbReference type="InterPro" id="IPR003593">
    <property type="entry name" value="AAA+_ATPase"/>
</dbReference>
<dbReference type="InterPro" id="IPR003439">
    <property type="entry name" value="ABC_transporter-like_ATP-bd"/>
</dbReference>
<dbReference type="InterPro" id="IPR017871">
    <property type="entry name" value="ABC_transporter-like_CS"/>
</dbReference>
<dbReference type="InterPro" id="IPR045865">
    <property type="entry name" value="ACT-like_dom_sf"/>
</dbReference>
<dbReference type="InterPro" id="IPR041701">
    <property type="entry name" value="MetN_ABC"/>
</dbReference>
<dbReference type="InterPro" id="IPR050086">
    <property type="entry name" value="MetN_ABC_transporter-like"/>
</dbReference>
<dbReference type="InterPro" id="IPR018449">
    <property type="entry name" value="NIL_domain"/>
</dbReference>
<dbReference type="InterPro" id="IPR027417">
    <property type="entry name" value="P-loop_NTPase"/>
</dbReference>
<dbReference type="PANTHER" id="PTHR43166">
    <property type="entry name" value="AMINO ACID IMPORT ATP-BINDING PROTEIN"/>
    <property type="match status" value="1"/>
</dbReference>
<dbReference type="PANTHER" id="PTHR43166:SF30">
    <property type="entry name" value="METHIONINE IMPORT ATP-BINDING PROTEIN METN"/>
    <property type="match status" value="1"/>
</dbReference>
<dbReference type="Pfam" id="PF00005">
    <property type="entry name" value="ABC_tran"/>
    <property type="match status" value="1"/>
</dbReference>
<dbReference type="Pfam" id="PF09383">
    <property type="entry name" value="NIL"/>
    <property type="match status" value="1"/>
</dbReference>
<dbReference type="SMART" id="SM00382">
    <property type="entry name" value="AAA"/>
    <property type="match status" value="1"/>
</dbReference>
<dbReference type="SMART" id="SM00930">
    <property type="entry name" value="NIL"/>
    <property type="match status" value="1"/>
</dbReference>
<dbReference type="SUPFAM" id="SSF55021">
    <property type="entry name" value="ACT-like"/>
    <property type="match status" value="1"/>
</dbReference>
<dbReference type="SUPFAM" id="SSF52540">
    <property type="entry name" value="P-loop containing nucleoside triphosphate hydrolases"/>
    <property type="match status" value="1"/>
</dbReference>
<dbReference type="PROSITE" id="PS00211">
    <property type="entry name" value="ABC_TRANSPORTER_1"/>
    <property type="match status" value="1"/>
</dbReference>
<dbReference type="PROSITE" id="PS50893">
    <property type="entry name" value="ABC_TRANSPORTER_2"/>
    <property type="match status" value="1"/>
</dbReference>
<dbReference type="PROSITE" id="PS51264">
    <property type="entry name" value="METN"/>
    <property type="match status" value="1"/>
</dbReference>
<gene>
    <name evidence="1" type="primary">metN1</name>
    <name type="ordered locus">BMA0414</name>
</gene>
<comment type="function">
    <text evidence="1">Part of the ABC transporter complex MetNIQ involved in methionine import. Responsible for energy coupling to the transport system.</text>
</comment>
<comment type="catalytic activity">
    <reaction evidence="1">
        <text>L-methionine(out) + ATP + H2O = L-methionine(in) + ADP + phosphate + H(+)</text>
        <dbReference type="Rhea" id="RHEA:29779"/>
        <dbReference type="ChEBI" id="CHEBI:15377"/>
        <dbReference type="ChEBI" id="CHEBI:15378"/>
        <dbReference type="ChEBI" id="CHEBI:30616"/>
        <dbReference type="ChEBI" id="CHEBI:43474"/>
        <dbReference type="ChEBI" id="CHEBI:57844"/>
        <dbReference type="ChEBI" id="CHEBI:456216"/>
        <dbReference type="EC" id="7.4.2.11"/>
    </reaction>
</comment>
<comment type="catalytic activity">
    <reaction evidence="1">
        <text>D-methionine(out) + ATP + H2O = D-methionine(in) + ADP + phosphate + H(+)</text>
        <dbReference type="Rhea" id="RHEA:29767"/>
        <dbReference type="ChEBI" id="CHEBI:15377"/>
        <dbReference type="ChEBI" id="CHEBI:15378"/>
        <dbReference type="ChEBI" id="CHEBI:30616"/>
        <dbReference type="ChEBI" id="CHEBI:43474"/>
        <dbReference type="ChEBI" id="CHEBI:57932"/>
        <dbReference type="ChEBI" id="CHEBI:456216"/>
        <dbReference type="EC" id="7.4.2.11"/>
    </reaction>
</comment>
<comment type="subunit">
    <text evidence="1">The complex is composed of two ATP-binding proteins (MetN), two transmembrane proteins (MetI) and a solute-binding protein (MetQ).</text>
</comment>
<comment type="subcellular location">
    <subcellularLocation>
        <location evidence="1">Cell inner membrane</location>
        <topology evidence="1">Peripheral membrane protein</topology>
    </subcellularLocation>
</comment>
<comment type="similarity">
    <text evidence="1">Belongs to the ABC transporter superfamily. Methionine importer (TC 3.A.1.24) family.</text>
</comment>
<reference key="1">
    <citation type="journal article" date="2004" name="Proc. Natl. Acad. Sci. U.S.A.">
        <title>Structural flexibility in the Burkholderia mallei genome.</title>
        <authorList>
            <person name="Nierman W.C."/>
            <person name="DeShazer D."/>
            <person name="Kim H.S."/>
            <person name="Tettelin H."/>
            <person name="Nelson K.E."/>
            <person name="Feldblyum T.V."/>
            <person name="Ulrich R.L."/>
            <person name="Ronning C.M."/>
            <person name="Brinkac L.M."/>
            <person name="Daugherty S.C."/>
            <person name="Davidsen T.D."/>
            <person name="DeBoy R.T."/>
            <person name="Dimitrov G."/>
            <person name="Dodson R.J."/>
            <person name="Durkin A.S."/>
            <person name="Gwinn M.L."/>
            <person name="Haft D.H."/>
            <person name="Khouri H.M."/>
            <person name="Kolonay J.F."/>
            <person name="Madupu R."/>
            <person name="Mohammoud Y."/>
            <person name="Nelson W.C."/>
            <person name="Radune D."/>
            <person name="Romero C.M."/>
            <person name="Sarria S."/>
            <person name="Selengut J."/>
            <person name="Shamblin C."/>
            <person name="Sullivan S.A."/>
            <person name="White O."/>
            <person name="Yu Y."/>
            <person name="Zafar N."/>
            <person name="Zhou L."/>
            <person name="Fraser C.M."/>
        </authorList>
    </citation>
    <scope>NUCLEOTIDE SEQUENCE [LARGE SCALE GENOMIC DNA]</scope>
    <source>
        <strain>ATCC 23344</strain>
    </source>
</reference>